<protein>
    <recommendedName>
        <fullName>Actin-related protein 2</fullName>
    </recommendedName>
    <alternativeName>
        <fullName>Actin-like protein 2</fullName>
    </alternativeName>
</protein>
<comment type="function">
    <text evidence="1">Functions as ATP-binding component of the Arp2/3 complex which is involved in regulation of actin polymerization and together with an activating nucleation-promoting factor (NPF) mediates the formation of branched actin networks. Seems to contact the pointed end of the daughter actin filament (By similarity).</text>
</comment>
<comment type="subunit">
    <text evidence="1">Component of the Arp2/3 complex.</text>
</comment>
<comment type="subcellular location">
    <subcellularLocation>
        <location evidence="2">Cytoplasm</location>
        <location evidence="2">Cytoskeleton</location>
    </subcellularLocation>
    <subcellularLocation>
        <location evidence="2">Cell projection</location>
    </subcellularLocation>
</comment>
<comment type="similarity">
    <text evidence="3">Belongs to the actin family. ARP2 subfamily.</text>
</comment>
<proteinExistence type="evidence at transcript level"/>
<accession>P53487</accession>
<sequence>MTDSSKVIVCDNGTGFVKCGFARSNFPASIFPSMVGRPILRSEEKFDNVEIKDIMVGDEASKLRSMLQITYPLDNGIVRNWEDAEHVWNYTFFEKLKVDPKDCKILLTEPPMNPLANREKMVQVMFEKYGFKAAYIAIQAVLTLYAQGLLTGVVVDSGDGVTHIVPVYEGFSLPHLTRRLNVAGRDVTRYLIKLLLLRGYVFNRTADFETVRQIKEKFCYVGYDLELEKRLALETTTLVEKYTLPDGRVIPIGAERFEAPECMFNPALVDQESVGVGELVFDCINKADIDTRAEFYNHIVLSGGSTMYPGLPSRLEKEIKRLYFERVAKGNKVSMQKFKCRIEDPPRRKHMVFLGGAVLAEIMKDKTAFWMNKSEYEEQGPRVLRKCF</sequence>
<reference key="1">
    <citation type="journal article" date="1995" name="J. Cell Biol.">
        <title>Sequences, structural models, and cellular localization of the actin-related proteins Arp2 and Arp3 from Acanthamoeba.</title>
        <authorList>
            <person name="Kelleher J.F."/>
            <person name="Atkinson S.J."/>
            <person name="Pollard T.D."/>
        </authorList>
    </citation>
    <scope>NUCLEOTIDE SEQUENCE [MRNA]</scope>
    <source>
        <strain>ATCC 30010 / Neff</strain>
    </source>
</reference>
<gene>
    <name type="primary">arp2</name>
</gene>
<evidence type="ECO:0000250" key="1"/>
<evidence type="ECO:0000250" key="2">
    <source>
        <dbReference type="UniProtKB" id="O96621"/>
    </source>
</evidence>
<evidence type="ECO:0000305" key="3"/>
<dbReference type="EMBL" id="U29609">
    <property type="protein sequence ID" value="AAC46911.1"/>
    <property type="molecule type" value="mRNA"/>
</dbReference>
<dbReference type="SMR" id="P53487"/>
<dbReference type="IntAct" id="P53487">
    <property type="interactions" value="1"/>
</dbReference>
<dbReference type="VEuPathDB" id="AmoebaDB:ACA1_074650"/>
<dbReference type="GO" id="GO:0015629">
    <property type="term" value="C:actin cytoskeleton"/>
    <property type="evidence" value="ECO:0007669"/>
    <property type="project" value="UniProtKB-ARBA"/>
</dbReference>
<dbReference type="GO" id="GO:0042995">
    <property type="term" value="C:cell projection"/>
    <property type="evidence" value="ECO:0007669"/>
    <property type="project" value="UniProtKB-SubCell"/>
</dbReference>
<dbReference type="GO" id="GO:0005737">
    <property type="term" value="C:cytoplasm"/>
    <property type="evidence" value="ECO:0007669"/>
    <property type="project" value="UniProtKB-KW"/>
</dbReference>
<dbReference type="GO" id="GO:0003779">
    <property type="term" value="F:actin binding"/>
    <property type="evidence" value="ECO:0007669"/>
    <property type="project" value="UniProtKB-KW"/>
</dbReference>
<dbReference type="GO" id="GO:0005524">
    <property type="term" value="F:ATP binding"/>
    <property type="evidence" value="ECO:0007669"/>
    <property type="project" value="UniProtKB-KW"/>
</dbReference>
<dbReference type="GO" id="GO:0006909">
    <property type="term" value="P:phagocytosis"/>
    <property type="evidence" value="ECO:0007669"/>
    <property type="project" value="UniProtKB-ARBA"/>
</dbReference>
<dbReference type="CDD" id="cd10220">
    <property type="entry name" value="ASKHA_NBD_Arp2"/>
    <property type="match status" value="1"/>
</dbReference>
<dbReference type="FunFam" id="3.30.420.40:FF:000148">
    <property type="entry name" value="Actin, alpha skeletal muscle"/>
    <property type="match status" value="1"/>
</dbReference>
<dbReference type="FunFam" id="3.90.640.10:FF:000005">
    <property type="entry name" value="Actin-related protein 2"/>
    <property type="match status" value="1"/>
</dbReference>
<dbReference type="Gene3D" id="3.30.420.40">
    <property type="match status" value="2"/>
</dbReference>
<dbReference type="Gene3D" id="3.90.640.10">
    <property type="entry name" value="Actin, Chain A, domain 4"/>
    <property type="match status" value="1"/>
</dbReference>
<dbReference type="InterPro" id="IPR004000">
    <property type="entry name" value="Actin"/>
</dbReference>
<dbReference type="InterPro" id="IPR020902">
    <property type="entry name" value="Actin/actin-like_CS"/>
</dbReference>
<dbReference type="InterPro" id="IPR043129">
    <property type="entry name" value="ATPase_NBD"/>
</dbReference>
<dbReference type="PANTHER" id="PTHR11937">
    <property type="entry name" value="ACTIN"/>
    <property type="match status" value="1"/>
</dbReference>
<dbReference type="Pfam" id="PF00022">
    <property type="entry name" value="Actin"/>
    <property type="match status" value="1"/>
</dbReference>
<dbReference type="PRINTS" id="PR00190">
    <property type="entry name" value="ACTIN"/>
</dbReference>
<dbReference type="SMART" id="SM00268">
    <property type="entry name" value="ACTIN"/>
    <property type="match status" value="1"/>
</dbReference>
<dbReference type="SUPFAM" id="SSF53067">
    <property type="entry name" value="Actin-like ATPase domain"/>
    <property type="match status" value="2"/>
</dbReference>
<dbReference type="PROSITE" id="PS01132">
    <property type="entry name" value="ACTINS_ACT_LIKE"/>
    <property type="match status" value="1"/>
</dbReference>
<feature type="chain" id="PRO_0000089072" description="Actin-related protein 2">
    <location>
        <begin position="1"/>
        <end position="388"/>
    </location>
</feature>
<feature type="binding site" evidence="1">
    <location>
        <begin position="158"/>
        <end position="160"/>
    </location>
    <ligand>
        <name>ATP</name>
        <dbReference type="ChEBI" id="CHEBI:30616"/>
    </ligand>
</feature>
<feature type="binding site" evidence="1">
    <location>
        <begin position="212"/>
        <end position="216"/>
    </location>
    <ligand>
        <name>ATP</name>
        <dbReference type="ChEBI" id="CHEBI:30616"/>
    </ligand>
</feature>
<feature type="binding site" evidence="1">
    <location>
        <begin position="303"/>
        <end position="308"/>
    </location>
    <ligand>
        <name>ATP</name>
        <dbReference type="ChEBI" id="CHEBI:30616"/>
    </ligand>
</feature>
<organism>
    <name type="scientific">Acanthamoeba castellanii</name>
    <name type="common">Amoeba</name>
    <dbReference type="NCBI Taxonomy" id="5755"/>
    <lineage>
        <taxon>Eukaryota</taxon>
        <taxon>Amoebozoa</taxon>
        <taxon>Discosea</taxon>
        <taxon>Longamoebia</taxon>
        <taxon>Centramoebida</taxon>
        <taxon>Acanthamoebidae</taxon>
        <taxon>Acanthamoeba</taxon>
    </lineage>
</organism>
<keyword id="KW-0009">Actin-binding</keyword>
<keyword id="KW-0067">ATP-binding</keyword>
<keyword id="KW-0966">Cell projection</keyword>
<keyword id="KW-0963">Cytoplasm</keyword>
<keyword id="KW-0206">Cytoskeleton</keyword>
<keyword id="KW-0547">Nucleotide-binding</keyword>
<name>ARP2_ACACA</name>